<feature type="chain" id="PRO_0000063579" description="Chaperonin GroEL">
    <location>
        <begin position="1"/>
        <end position="538"/>
    </location>
</feature>
<feature type="binding site" evidence="1">
    <location>
        <begin position="29"/>
        <end position="32"/>
    </location>
    <ligand>
        <name>ATP</name>
        <dbReference type="ChEBI" id="CHEBI:30616"/>
    </ligand>
</feature>
<feature type="binding site" evidence="1">
    <location>
        <begin position="86"/>
        <end position="90"/>
    </location>
    <ligand>
        <name>ATP</name>
        <dbReference type="ChEBI" id="CHEBI:30616"/>
    </ligand>
</feature>
<feature type="binding site" evidence="1">
    <location>
        <position position="413"/>
    </location>
    <ligand>
        <name>ATP</name>
        <dbReference type="ChEBI" id="CHEBI:30616"/>
    </ligand>
</feature>
<feature type="binding site" evidence="1">
    <location>
        <begin position="479"/>
        <end position="481"/>
    </location>
    <ligand>
        <name>ATP</name>
        <dbReference type="ChEBI" id="CHEBI:30616"/>
    </ligand>
</feature>
<feature type="binding site" evidence="1">
    <location>
        <position position="495"/>
    </location>
    <ligand>
        <name>ATP</name>
        <dbReference type="ChEBI" id="CHEBI:30616"/>
    </ligand>
</feature>
<protein>
    <recommendedName>
        <fullName evidence="1">Chaperonin GroEL</fullName>
        <ecNumber evidence="1">5.6.1.7</ecNumber>
    </recommendedName>
    <alternativeName>
        <fullName evidence="1">60 kDa chaperonin</fullName>
    </alternativeName>
    <alternativeName>
        <fullName evidence="1">Chaperonin-60</fullName>
        <shortName evidence="1">Cpn60</shortName>
    </alternativeName>
</protein>
<dbReference type="EC" id="5.6.1.7" evidence="1"/>
<dbReference type="EMBL" id="AE000512">
    <property type="protein sequence ID" value="AAD35591.1"/>
    <property type="molecule type" value="Genomic_DNA"/>
</dbReference>
<dbReference type="PIR" id="H72367">
    <property type="entry name" value="H72367"/>
</dbReference>
<dbReference type="RefSeq" id="NP_228316.1">
    <property type="nucleotide sequence ID" value="NC_000853.1"/>
</dbReference>
<dbReference type="RefSeq" id="WP_004081434.1">
    <property type="nucleotide sequence ID" value="NC_000853.1"/>
</dbReference>
<dbReference type="SMR" id="Q9WYX6"/>
<dbReference type="FunCoup" id="Q9WYX6">
    <property type="interactions" value="387"/>
</dbReference>
<dbReference type="STRING" id="243274.TM_0506"/>
<dbReference type="PaxDb" id="243274-THEMA_02145"/>
<dbReference type="EnsemblBacteria" id="AAD35591">
    <property type="protein sequence ID" value="AAD35591"/>
    <property type="gene ID" value="TM_0506"/>
</dbReference>
<dbReference type="KEGG" id="tma:TM0506"/>
<dbReference type="KEGG" id="tmi:THEMA_02145"/>
<dbReference type="KEGG" id="tmm:Tmari_0502"/>
<dbReference type="eggNOG" id="COG0459">
    <property type="taxonomic scope" value="Bacteria"/>
</dbReference>
<dbReference type="InParanoid" id="Q9WYX6"/>
<dbReference type="OrthoDB" id="9766614at2"/>
<dbReference type="BRENDA" id="3.5.5.7">
    <property type="organism ID" value="6331"/>
</dbReference>
<dbReference type="Proteomes" id="UP000008183">
    <property type="component" value="Chromosome"/>
</dbReference>
<dbReference type="GO" id="GO:1990220">
    <property type="term" value="C:GroEL-GroES complex"/>
    <property type="evidence" value="ECO:0000318"/>
    <property type="project" value="GO_Central"/>
</dbReference>
<dbReference type="GO" id="GO:0005524">
    <property type="term" value="F:ATP binding"/>
    <property type="evidence" value="ECO:0000318"/>
    <property type="project" value="GO_Central"/>
</dbReference>
<dbReference type="GO" id="GO:0140662">
    <property type="term" value="F:ATP-dependent protein folding chaperone"/>
    <property type="evidence" value="ECO:0007669"/>
    <property type="project" value="InterPro"/>
</dbReference>
<dbReference type="GO" id="GO:0016853">
    <property type="term" value="F:isomerase activity"/>
    <property type="evidence" value="ECO:0007669"/>
    <property type="project" value="UniProtKB-KW"/>
</dbReference>
<dbReference type="GO" id="GO:0051082">
    <property type="term" value="F:unfolded protein binding"/>
    <property type="evidence" value="ECO:0000318"/>
    <property type="project" value="GO_Central"/>
</dbReference>
<dbReference type="GO" id="GO:0051085">
    <property type="term" value="P:chaperone cofactor-dependent protein refolding"/>
    <property type="evidence" value="ECO:0000318"/>
    <property type="project" value="GO_Central"/>
</dbReference>
<dbReference type="GO" id="GO:0042026">
    <property type="term" value="P:protein refolding"/>
    <property type="evidence" value="ECO:0007669"/>
    <property type="project" value="UniProtKB-UniRule"/>
</dbReference>
<dbReference type="GO" id="GO:0009408">
    <property type="term" value="P:response to heat"/>
    <property type="evidence" value="ECO:0000318"/>
    <property type="project" value="GO_Central"/>
</dbReference>
<dbReference type="CDD" id="cd03344">
    <property type="entry name" value="GroEL"/>
    <property type="match status" value="1"/>
</dbReference>
<dbReference type="FunFam" id="1.10.560.10:FF:000001">
    <property type="entry name" value="60 kDa chaperonin"/>
    <property type="match status" value="1"/>
</dbReference>
<dbReference type="FunFam" id="3.50.7.10:FF:000001">
    <property type="entry name" value="60 kDa chaperonin"/>
    <property type="match status" value="1"/>
</dbReference>
<dbReference type="Gene3D" id="3.50.7.10">
    <property type="entry name" value="GroEL"/>
    <property type="match status" value="1"/>
</dbReference>
<dbReference type="Gene3D" id="1.10.560.10">
    <property type="entry name" value="GroEL-like equatorial domain"/>
    <property type="match status" value="1"/>
</dbReference>
<dbReference type="Gene3D" id="3.30.260.10">
    <property type="entry name" value="TCP-1-like chaperonin intermediate domain"/>
    <property type="match status" value="1"/>
</dbReference>
<dbReference type="HAMAP" id="MF_00600">
    <property type="entry name" value="CH60"/>
    <property type="match status" value="1"/>
</dbReference>
<dbReference type="InterPro" id="IPR018370">
    <property type="entry name" value="Chaperonin_Cpn60_CS"/>
</dbReference>
<dbReference type="InterPro" id="IPR001844">
    <property type="entry name" value="Cpn60/GroEL"/>
</dbReference>
<dbReference type="InterPro" id="IPR002423">
    <property type="entry name" value="Cpn60/GroEL/TCP-1"/>
</dbReference>
<dbReference type="InterPro" id="IPR027409">
    <property type="entry name" value="GroEL-like_apical_dom_sf"/>
</dbReference>
<dbReference type="InterPro" id="IPR027413">
    <property type="entry name" value="GROEL-like_equatorial_sf"/>
</dbReference>
<dbReference type="InterPro" id="IPR027410">
    <property type="entry name" value="TCP-1-like_intermed_sf"/>
</dbReference>
<dbReference type="NCBIfam" id="TIGR02348">
    <property type="entry name" value="GroEL"/>
    <property type="match status" value="1"/>
</dbReference>
<dbReference type="NCBIfam" id="NF000592">
    <property type="entry name" value="PRK00013.1"/>
    <property type="match status" value="1"/>
</dbReference>
<dbReference type="NCBIfam" id="NF009487">
    <property type="entry name" value="PRK12849.1"/>
    <property type="match status" value="1"/>
</dbReference>
<dbReference type="NCBIfam" id="NF009488">
    <property type="entry name" value="PRK12850.1"/>
    <property type="match status" value="1"/>
</dbReference>
<dbReference type="NCBIfam" id="NF009489">
    <property type="entry name" value="PRK12851.1"/>
    <property type="match status" value="1"/>
</dbReference>
<dbReference type="PANTHER" id="PTHR45633">
    <property type="entry name" value="60 KDA HEAT SHOCK PROTEIN, MITOCHONDRIAL"/>
    <property type="match status" value="1"/>
</dbReference>
<dbReference type="Pfam" id="PF00118">
    <property type="entry name" value="Cpn60_TCP1"/>
    <property type="match status" value="1"/>
</dbReference>
<dbReference type="PRINTS" id="PR00298">
    <property type="entry name" value="CHAPERONIN60"/>
</dbReference>
<dbReference type="SUPFAM" id="SSF52029">
    <property type="entry name" value="GroEL apical domain-like"/>
    <property type="match status" value="1"/>
</dbReference>
<dbReference type="SUPFAM" id="SSF48592">
    <property type="entry name" value="GroEL equatorial domain-like"/>
    <property type="match status" value="1"/>
</dbReference>
<dbReference type="SUPFAM" id="SSF54849">
    <property type="entry name" value="GroEL-intermediate domain like"/>
    <property type="match status" value="1"/>
</dbReference>
<dbReference type="PROSITE" id="PS00296">
    <property type="entry name" value="CHAPERONINS_CPN60"/>
    <property type="match status" value="1"/>
</dbReference>
<comment type="function">
    <text evidence="1">Together with its co-chaperonin GroES, plays an essential role in assisting protein folding. The GroEL-GroES system forms a nano-cage that allows encapsulation of the non-native substrate proteins and provides a physical environment optimized to promote and accelerate protein folding.</text>
</comment>
<comment type="catalytic activity">
    <reaction evidence="1">
        <text>ATP + H2O + a folded polypeptide = ADP + phosphate + an unfolded polypeptide.</text>
        <dbReference type="EC" id="5.6.1.7"/>
    </reaction>
</comment>
<comment type="subunit">
    <text evidence="1">Forms a cylinder of 14 subunits composed of two heptameric rings stacked back-to-back. Interacts with the co-chaperonin GroES.</text>
</comment>
<comment type="subcellular location">
    <subcellularLocation>
        <location evidence="1">Cytoplasm</location>
    </subcellularLocation>
</comment>
<comment type="similarity">
    <text evidence="1">Belongs to the chaperonin (HSP60) family.</text>
</comment>
<name>CH60_THEMA</name>
<accession>Q9WYX6</accession>
<evidence type="ECO:0000255" key="1">
    <source>
        <dbReference type="HAMAP-Rule" id="MF_00600"/>
    </source>
</evidence>
<proteinExistence type="inferred from homology"/>
<sequence>MPKILKFNEEARRALERGVDKVANAVKVTLGPKGRNVVIEKSWGSPTITNDGVSIAKEIELEDKFENLGAQLVKEVASKTNDVAGDGTTTATVLAQAMIKEGLKNVAAGANPILLKRGIDKAVEKAVEEIKKVSKKLSGREDIAHVAAISANSAEIGELIAEAMDKVGEDGVITVEDSKTLETYVEFTEGMQFDRGYISPYFVTDAEKMEVVLKEPFILITDRKLSAVKPLIPILEKVAQTGKPLLVIAEDVEGEVLTTLVLNKLKGTLQSCAVKAPGFGERRKAMLQDIAILTGGQVASEELGINLEDLTLEDLGRADLVRVKKDETIIIGGKGDPEAIKKRIAQIKAQIEETTSEYEKETLQERMAKLAGGVAVIKVGAATETELKEKKHRIEDALSATRAAVEEGIVPGGGVTLLRARKAVEKVIEELEGDEKIGAQIVYKALSAPIKQIAENAGYDGAVIIEKILSNDDPAYGFDALRGEYCNMFERGIIDPAKVTRSALQNAASIAGMLLTTEVLIVEKPEEKKETPSMPEEF</sequence>
<reference key="1">
    <citation type="journal article" date="1999" name="Nature">
        <title>Evidence for lateral gene transfer between Archaea and Bacteria from genome sequence of Thermotoga maritima.</title>
        <authorList>
            <person name="Nelson K.E."/>
            <person name="Clayton R.A."/>
            <person name="Gill S.R."/>
            <person name="Gwinn M.L."/>
            <person name="Dodson R.J."/>
            <person name="Haft D.H."/>
            <person name="Hickey E.K."/>
            <person name="Peterson J.D."/>
            <person name="Nelson W.C."/>
            <person name="Ketchum K.A."/>
            <person name="McDonald L.A."/>
            <person name="Utterback T.R."/>
            <person name="Malek J.A."/>
            <person name="Linher K.D."/>
            <person name="Garrett M.M."/>
            <person name="Stewart A.M."/>
            <person name="Cotton M.D."/>
            <person name="Pratt M.S."/>
            <person name="Phillips C.A."/>
            <person name="Richardson D.L."/>
            <person name="Heidelberg J.F."/>
            <person name="Sutton G.G."/>
            <person name="Fleischmann R.D."/>
            <person name="Eisen J.A."/>
            <person name="White O."/>
            <person name="Salzberg S.L."/>
            <person name="Smith H.O."/>
            <person name="Venter J.C."/>
            <person name="Fraser C.M."/>
        </authorList>
    </citation>
    <scope>NUCLEOTIDE SEQUENCE [LARGE SCALE GENOMIC DNA]</scope>
    <source>
        <strain>ATCC 43589 / DSM 3109 / JCM 10099 / NBRC 100826 / MSB8</strain>
    </source>
</reference>
<organism>
    <name type="scientific">Thermotoga maritima (strain ATCC 43589 / DSM 3109 / JCM 10099 / NBRC 100826 / MSB8)</name>
    <dbReference type="NCBI Taxonomy" id="243274"/>
    <lineage>
        <taxon>Bacteria</taxon>
        <taxon>Thermotogati</taxon>
        <taxon>Thermotogota</taxon>
        <taxon>Thermotogae</taxon>
        <taxon>Thermotogales</taxon>
        <taxon>Thermotogaceae</taxon>
        <taxon>Thermotoga</taxon>
    </lineage>
</organism>
<gene>
    <name evidence="1" type="primary">groEL</name>
    <name evidence="1" type="synonym">groL</name>
    <name type="synonym">mopA</name>
    <name type="ordered locus">TM_0506</name>
</gene>
<keyword id="KW-0067">ATP-binding</keyword>
<keyword id="KW-0143">Chaperone</keyword>
<keyword id="KW-0963">Cytoplasm</keyword>
<keyword id="KW-0413">Isomerase</keyword>
<keyword id="KW-0547">Nucleotide-binding</keyword>
<keyword id="KW-1185">Reference proteome</keyword>